<feature type="chain" id="PRO_1000146072" description="Small ribosomal subunit protein uS10">
    <location>
        <begin position="1"/>
        <end position="101"/>
    </location>
</feature>
<name>RS10_RHOOB</name>
<comment type="function">
    <text evidence="1">Involved in the binding of tRNA to the ribosomes.</text>
</comment>
<comment type="subunit">
    <text evidence="1">Part of the 30S ribosomal subunit.</text>
</comment>
<comment type="similarity">
    <text evidence="1">Belongs to the universal ribosomal protein uS10 family.</text>
</comment>
<keyword id="KW-0687">Ribonucleoprotein</keyword>
<keyword id="KW-0689">Ribosomal protein</keyword>
<protein>
    <recommendedName>
        <fullName evidence="1">Small ribosomal subunit protein uS10</fullName>
    </recommendedName>
    <alternativeName>
        <fullName evidence="2">30S ribosomal protein S10</fullName>
    </alternativeName>
</protein>
<organism>
    <name type="scientific">Rhodococcus opacus (strain B4)</name>
    <dbReference type="NCBI Taxonomy" id="632772"/>
    <lineage>
        <taxon>Bacteria</taxon>
        <taxon>Bacillati</taxon>
        <taxon>Actinomycetota</taxon>
        <taxon>Actinomycetes</taxon>
        <taxon>Mycobacteriales</taxon>
        <taxon>Nocardiaceae</taxon>
        <taxon>Rhodococcus</taxon>
    </lineage>
</organism>
<evidence type="ECO:0000255" key="1">
    <source>
        <dbReference type="HAMAP-Rule" id="MF_00508"/>
    </source>
</evidence>
<evidence type="ECO:0000305" key="2"/>
<dbReference type="EMBL" id="AP011115">
    <property type="protein sequence ID" value="BAH54432.1"/>
    <property type="molecule type" value="Genomic_DNA"/>
</dbReference>
<dbReference type="RefSeq" id="WP_003938093.1">
    <property type="nucleotide sequence ID" value="NC_012522.1"/>
</dbReference>
<dbReference type="SMR" id="C1B011"/>
<dbReference type="STRING" id="632772.ROP_61850"/>
<dbReference type="GeneID" id="98053541"/>
<dbReference type="KEGG" id="rop:ROP_61850"/>
<dbReference type="PATRIC" id="fig|632772.20.peg.6461"/>
<dbReference type="HOGENOM" id="CLU_122625_1_3_11"/>
<dbReference type="OrthoDB" id="9804464at2"/>
<dbReference type="Proteomes" id="UP000002212">
    <property type="component" value="Chromosome"/>
</dbReference>
<dbReference type="GO" id="GO:1990904">
    <property type="term" value="C:ribonucleoprotein complex"/>
    <property type="evidence" value="ECO:0007669"/>
    <property type="project" value="UniProtKB-KW"/>
</dbReference>
<dbReference type="GO" id="GO:0005840">
    <property type="term" value="C:ribosome"/>
    <property type="evidence" value="ECO:0007669"/>
    <property type="project" value="UniProtKB-KW"/>
</dbReference>
<dbReference type="GO" id="GO:0003735">
    <property type="term" value="F:structural constituent of ribosome"/>
    <property type="evidence" value="ECO:0007669"/>
    <property type="project" value="InterPro"/>
</dbReference>
<dbReference type="GO" id="GO:0000049">
    <property type="term" value="F:tRNA binding"/>
    <property type="evidence" value="ECO:0007669"/>
    <property type="project" value="UniProtKB-UniRule"/>
</dbReference>
<dbReference type="GO" id="GO:0006412">
    <property type="term" value="P:translation"/>
    <property type="evidence" value="ECO:0007669"/>
    <property type="project" value="UniProtKB-UniRule"/>
</dbReference>
<dbReference type="FunFam" id="3.30.70.600:FF:000001">
    <property type="entry name" value="30S ribosomal protein S10"/>
    <property type="match status" value="1"/>
</dbReference>
<dbReference type="Gene3D" id="3.30.70.600">
    <property type="entry name" value="Ribosomal protein S10 domain"/>
    <property type="match status" value="1"/>
</dbReference>
<dbReference type="HAMAP" id="MF_00508">
    <property type="entry name" value="Ribosomal_uS10"/>
    <property type="match status" value="1"/>
</dbReference>
<dbReference type="InterPro" id="IPR001848">
    <property type="entry name" value="Ribosomal_uS10"/>
</dbReference>
<dbReference type="InterPro" id="IPR018268">
    <property type="entry name" value="Ribosomal_uS10_CS"/>
</dbReference>
<dbReference type="InterPro" id="IPR027486">
    <property type="entry name" value="Ribosomal_uS10_dom"/>
</dbReference>
<dbReference type="InterPro" id="IPR036838">
    <property type="entry name" value="Ribosomal_uS10_dom_sf"/>
</dbReference>
<dbReference type="NCBIfam" id="NF001861">
    <property type="entry name" value="PRK00596.1"/>
    <property type="match status" value="1"/>
</dbReference>
<dbReference type="NCBIfam" id="TIGR01049">
    <property type="entry name" value="rpsJ_bact"/>
    <property type="match status" value="1"/>
</dbReference>
<dbReference type="PANTHER" id="PTHR11700">
    <property type="entry name" value="30S RIBOSOMAL PROTEIN S10 FAMILY MEMBER"/>
    <property type="match status" value="1"/>
</dbReference>
<dbReference type="Pfam" id="PF00338">
    <property type="entry name" value="Ribosomal_S10"/>
    <property type="match status" value="1"/>
</dbReference>
<dbReference type="PRINTS" id="PR00971">
    <property type="entry name" value="RIBOSOMALS10"/>
</dbReference>
<dbReference type="SMART" id="SM01403">
    <property type="entry name" value="Ribosomal_S10"/>
    <property type="match status" value="1"/>
</dbReference>
<dbReference type="SUPFAM" id="SSF54999">
    <property type="entry name" value="Ribosomal protein S10"/>
    <property type="match status" value="1"/>
</dbReference>
<dbReference type="PROSITE" id="PS00361">
    <property type="entry name" value="RIBOSOMAL_S10"/>
    <property type="match status" value="1"/>
</dbReference>
<reference key="1">
    <citation type="submission" date="2009-03" db="EMBL/GenBank/DDBJ databases">
        <title>Comparison of the complete genome sequences of Rhodococcus erythropolis PR4 and Rhodococcus opacus B4.</title>
        <authorList>
            <person name="Takarada H."/>
            <person name="Sekine M."/>
            <person name="Hosoyama A."/>
            <person name="Yamada R."/>
            <person name="Fujisawa T."/>
            <person name="Omata S."/>
            <person name="Shimizu A."/>
            <person name="Tsukatani N."/>
            <person name="Tanikawa S."/>
            <person name="Fujita N."/>
            <person name="Harayama S."/>
        </authorList>
    </citation>
    <scope>NUCLEOTIDE SEQUENCE [LARGE SCALE GENOMIC DNA]</scope>
    <source>
        <strain>B4</strain>
    </source>
</reference>
<sequence>MAGQKIRIRLKAYDHEAIDASARKIVETVTRTGARVVGPVPLPTEKNVYCVIRSPHKYKDSREHFEMRTHKRLIDILDPTPKTVDALMRIDLPASVDVNIQ</sequence>
<proteinExistence type="inferred from homology"/>
<gene>
    <name evidence="1" type="primary">rpsJ</name>
    <name type="ordered locus">ROP_61850</name>
</gene>
<accession>C1B011</accession>